<sequence length="161" mass="18868">MENLTEDMKTWFEIYMLQNRYIGHLDNDRLERWPEMFTEDCTYEIVPKENADLGLPVGIVHCTNQRMLRDRVVSLRHANIYEEHTYRHMTSGLAIVAQRDGEIDTESNYVVVQTRSNGESNVYQAGKYYDTVVRTPDGLRYKAKRVIYDTSRVQTLLATPI</sequence>
<dbReference type="EC" id="1.14.12.1" evidence="2"/>
<dbReference type="EMBL" id="AY223539">
    <property type="protein sequence ID" value="AAO83640.1"/>
    <property type="molecule type" value="Genomic_DNA"/>
</dbReference>
<dbReference type="SMR" id="Q84BZ2"/>
<dbReference type="STRING" id="292.WI67_21080"/>
<dbReference type="KEGG" id="ag:AAO83640"/>
<dbReference type="eggNOG" id="COG5517">
    <property type="taxonomic scope" value="Bacteria"/>
</dbReference>
<dbReference type="BioCyc" id="MetaCyc:MONOMER-7530"/>
<dbReference type="BRENDA" id="1.14.12.1">
    <property type="organism ID" value="1028"/>
</dbReference>
<dbReference type="UniPathway" id="UPA01016">
    <property type="reaction ID" value="UER01026"/>
</dbReference>
<dbReference type="GO" id="GO:0018618">
    <property type="term" value="F:anthranilate 1,2-dioxygenase (deaminating, decarboxylating) activity"/>
    <property type="evidence" value="ECO:0007669"/>
    <property type="project" value="UniProtKB-EC"/>
</dbReference>
<dbReference type="GO" id="GO:0009056">
    <property type="term" value="P:catabolic process"/>
    <property type="evidence" value="ECO:0007669"/>
    <property type="project" value="UniProtKB-KW"/>
</dbReference>
<dbReference type="CDD" id="cd00667">
    <property type="entry name" value="ring_hydroxylating_dioxygenases_beta"/>
    <property type="match status" value="1"/>
</dbReference>
<dbReference type="Gene3D" id="3.10.450.50">
    <property type="match status" value="1"/>
</dbReference>
<dbReference type="InterPro" id="IPR017640">
    <property type="entry name" value="Anthranilate_1-2-diOase_ssu"/>
</dbReference>
<dbReference type="InterPro" id="IPR032710">
    <property type="entry name" value="NTF2-like_dom_sf"/>
</dbReference>
<dbReference type="InterPro" id="IPR000391">
    <property type="entry name" value="Rng_hydr_dOase-bsu"/>
</dbReference>
<dbReference type="InterPro" id="IPR037401">
    <property type="entry name" value="SnoaL-like"/>
</dbReference>
<dbReference type="NCBIfam" id="NF041685">
    <property type="entry name" value="ant_diox_AndAd"/>
    <property type="match status" value="1"/>
</dbReference>
<dbReference type="Pfam" id="PF13577">
    <property type="entry name" value="SnoaL_4"/>
    <property type="match status" value="1"/>
</dbReference>
<dbReference type="SUPFAM" id="SSF54427">
    <property type="entry name" value="NTF2-like"/>
    <property type="match status" value="1"/>
</dbReference>
<evidence type="ECO:0000255" key="1"/>
<evidence type="ECO:0000269" key="2">
    <source>
    </source>
</evidence>
<evidence type="ECO:0000303" key="3">
    <source>
    </source>
</evidence>
<evidence type="ECO:0000305" key="4"/>
<evidence type="ECO:0000312" key="5">
    <source>
        <dbReference type="EMBL" id="AAO83640.1"/>
    </source>
</evidence>
<feature type="chain" id="PRO_0000415162" description="Anthranilate 1,2-dioxygenase small subunit">
    <location>
        <begin position="1"/>
        <end position="161"/>
    </location>
</feature>
<name>ANDAD_BURCE</name>
<organism>
    <name type="scientific">Burkholderia cepacia</name>
    <name type="common">Pseudomonas cepacia</name>
    <dbReference type="NCBI Taxonomy" id="292"/>
    <lineage>
        <taxon>Bacteria</taxon>
        <taxon>Pseudomonadati</taxon>
        <taxon>Pseudomonadota</taxon>
        <taxon>Betaproteobacteria</taxon>
        <taxon>Burkholderiales</taxon>
        <taxon>Burkholderiaceae</taxon>
        <taxon>Burkholderia</taxon>
        <taxon>Burkholderia cepacia complex</taxon>
    </lineage>
</organism>
<keyword id="KW-0058">Aromatic hydrocarbons catabolism</keyword>
<keyword id="KW-0223">Dioxygenase</keyword>
<keyword id="KW-0520">NAD</keyword>
<keyword id="KW-0560">Oxidoreductase</keyword>
<accession>Q84BZ2</accession>
<reference evidence="4 5" key="1">
    <citation type="journal article" date="2003" name="J. Bacteriol.">
        <title>Characterization and regulation of the genes for a novel anthranilate 1,2-dioxygenase from Burkholderia cepacia DBO1.</title>
        <authorList>
            <person name="Chang H.K."/>
            <person name="Mohseni P."/>
            <person name="Zylstra G.J."/>
        </authorList>
    </citation>
    <scope>NUCLEOTIDE SEQUENCE [GENOMIC DNA]</scope>
    <scope>FUNCTION</scope>
    <scope>CATALYTIC ACTIVITY</scope>
    <scope>PATHWAY</scope>
    <scope>SUBUNIT</scope>
    <scope>INDUCTION</scope>
    <source>
        <strain evidence="5">ATCC 29424 / DBO1</strain>
    </source>
</reference>
<comment type="function">
    <text evidence="2">Oxygenase component of anthranilate dioxygenase multicomponent enzyme system which catalyzes the incorporation of both atoms of molecular oxygen into anthranilate to form catechol. Can also act on benzoate and salicylate but not on 2-chlorobenzoate or o-toluate.</text>
</comment>
<comment type="catalytic activity">
    <reaction evidence="2">
        <text>anthranilate + NADH + O2 + 3 H(+) = catechol + NH4(+) + CO2 + NAD(+)</text>
        <dbReference type="Rhea" id="RHEA:11076"/>
        <dbReference type="ChEBI" id="CHEBI:15378"/>
        <dbReference type="ChEBI" id="CHEBI:15379"/>
        <dbReference type="ChEBI" id="CHEBI:16526"/>
        <dbReference type="ChEBI" id="CHEBI:16567"/>
        <dbReference type="ChEBI" id="CHEBI:18135"/>
        <dbReference type="ChEBI" id="CHEBI:28938"/>
        <dbReference type="ChEBI" id="CHEBI:57540"/>
        <dbReference type="ChEBI" id="CHEBI:57945"/>
        <dbReference type="EC" id="1.14.12.1"/>
    </reaction>
</comment>
<comment type="catalytic activity">
    <reaction evidence="2">
        <text>anthranilate + NADPH + O2 + 3 H(+) = catechol + NH4(+) + CO2 + NADP(+)</text>
        <dbReference type="Rhea" id="RHEA:11072"/>
        <dbReference type="ChEBI" id="CHEBI:15378"/>
        <dbReference type="ChEBI" id="CHEBI:15379"/>
        <dbReference type="ChEBI" id="CHEBI:16526"/>
        <dbReference type="ChEBI" id="CHEBI:16567"/>
        <dbReference type="ChEBI" id="CHEBI:18135"/>
        <dbReference type="ChEBI" id="CHEBI:28938"/>
        <dbReference type="ChEBI" id="CHEBI:57783"/>
        <dbReference type="ChEBI" id="CHEBI:58349"/>
        <dbReference type="EC" id="1.14.12.1"/>
    </reaction>
</comment>
<comment type="pathway">
    <text evidence="2">Aromatic compound metabolism; anthranilate degradation via hydroxylation; catechol from anthranilate: step 1/1.</text>
</comment>
<comment type="subunit">
    <text evidence="2">Part of a multicomponent enzyme system composed of a reductase (AndAa), a ferredoxin (AndAb) and a two-subunit oxygenase component (AndAc and AndAd).</text>
</comment>
<comment type="induction">
    <text evidence="2">By anthranilate but not by benzoate or salicylate. Expression is positively regulated by the transcriptional regulator AndR.</text>
</comment>
<comment type="similarity">
    <text evidence="1">Belongs to the bacterial ring-hydroxylating dioxygenase beta subunit family.</text>
</comment>
<gene>
    <name evidence="5" type="primary">andAd</name>
</gene>
<proteinExistence type="evidence at protein level"/>
<protein>
    <recommendedName>
        <fullName evidence="3">Anthranilate 1,2-dioxygenase small subunit</fullName>
        <ecNumber evidence="2">1.14.12.1</ecNumber>
    </recommendedName>
</protein>